<proteinExistence type="inferred from homology"/>
<organism>
    <name type="scientific">Lawsonia intracellularis (strain PHE/MN1-00)</name>
    <dbReference type="NCBI Taxonomy" id="363253"/>
    <lineage>
        <taxon>Bacteria</taxon>
        <taxon>Pseudomonadati</taxon>
        <taxon>Thermodesulfobacteriota</taxon>
        <taxon>Desulfovibrionia</taxon>
        <taxon>Desulfovibrionales</taxon>
        <taxon>Desulfovibrionaceae</taxon>
        <taxon>Lawsonia</taxon>
    </lineage>
</organism>
<gene>
    <name evidence="1" type="primary">atpH</name>
    <name type="ordered locus">LI0400</name>
</gene>
<feature type="chain" id="PRO_0000371015" description="ATP synthase subunit delta">
    <location>
        <begin position="1"/>
        <end position="188"/>
    </location>
</feature>
<keyword id="KW-0066">ATP synthesis</keyword>
<keyword id="KW-1003">Cell membrane</keyword>
<keyword id="KW-0139">CF(1)</keyword>
<keyword id="KW-0375">Hydrogen ion transport</keyword>
<keyword id="KW-0406">Ion transport</keyword>
<keyword id="KW-0472">Membrane</keyword>
<keyword id="KW-1185">Reference proteome</keyword>
<keyword id="KW-0813">Transport</keyword>
<dbReference type="EMBL" id="AM180252">
    <property type="protein sequence ID" value="CAJ54456.1"/>
    <property type="molecule type" value="Genomic_DNA"/>
</dbReference>
<dbReference type="RefSeq" id="WP_011526485.1">
    <property type="nucleotide sequence ID" value="NC_008011.1"/>
</dbReference>
<dbReference type="SMR" id="Q1MRC0"/>
<dbReference type="STRING" id="363253.LI0400"/>
<dbReference type="KEGG" id="lip:LI0400"/>
<dbReference type="eggNOG" id="COG0712">
    <property type="taxonomic scope" value="Bacteria"/>
</dbReference>
<dbReference type="HOGENOM" id="CLU_085114_4_1_7"/>
<dbReference type="OrthoDB" id="9802471at2"/>
<dbReference type="Proteomes" id="UP000002430">
    <property type="component" value="Chromosome"/>
</dbReference>
<dbReference type="GO" id="GO:0005886">
    <property type="term" value="C:plasma membrane"/>
    <property type="evidence" value="ECO:0007669"/>
    <property type="project" value="UniProtKB-SubCell"/>
</dbReference>
<dbReference type="GO" id="GO:0045259">
    <property type="term" value="C:proton-transporting ATP synthase complex"/>
    <property type="evidence" value="ECO:0007669"/>
    <property type="project" value="UniProtKB-KW"/>
</dbReference>
<dbReference type="GO" id="GO:0046933">
    <property type="term" value="F:proton-transporting ATP synthase activity, rotational mechanism"/>
    <property type="evidence" value="ECO:0007669"/>
    <property type="project" value="UniProtKB-UniRule"/>
</dbReference>
<dbReference type="Gene3D" id="1.10.520.20">
    <property type="entry name" value="N-terminal domain of the delta subunit of the F1F0-ATP synthase"/>
    <property type="match status" value="1"/>
</dbReference>
<dbReference type="HAMAP" id="MF_01416">
    <property type="entry name" value="ATP_synth_delta_bact"/>
    <property type="match status" value="1"/>
</dbReference>
<dbReference type="InterPro" id="IPR026015">
    <property type="entry name" value="ATP_synth_OSCP/delta_N_sf"/>
</dbReference>
<dbReference type="InterPro" id="IPR020781">
    <property type="entry name" value="ATPase_OSCP/d_CS"/>
</dbReference>
<dbReference type="InterPro" id="IPR000711">
    <property type="entry name" value="ATPase_OSCP/dsu"/>
</dbReference>
<dbReference type="NCBIfam" id="TIGR01145">
    <property type="entry name" value="ATP_synt_delta"/>
    <property type="match status" value="1"/>
</dbReference>
<dbReference type="PANTHER" id="PTHR11910">
    <property type="entry name" value="ATP SYNTHASE DELTA CHAIN"/>
    <property type="match status" value="1"/>
</dbReference>
<dbReference type="Pfam" id="PF00213">
    <property type="entry name" value="OSCP"/>
    <property type="match status" value="1"/>
</dbReference>
<dbReference type="PRINTS" id="PR00125">
    <property type="entry name" value="ATPASEDELTA"/>
</dbReference>
<dbReference type="SUPFAM" id="SSF47928">
    <property type="entry name" value="N-terminal domain of the delta subunit of the F1F0-ATP synthase"/>
    <property type="match status" value="1"/>
</dbReference>
<dbReference type="PROSITE" id="PS00389">
    <property type="entry name" value="ATPASE_DELTA"/>
    <property type="match status" value="1"/>
</dbReference>
<reference key="1">
    <citation type="submission" date="2005-11" db="EMBL/GenBank/DDBJ databases">
        <title>The complete genome sequence of Lawsonia intracellularis: the causative agent of proliferative enteropathy.</title>
        <authorList>
            <person name="Kaur K."/>
            <person name="Zhang Q."/>
            <person name="Beckler D."/>
            <person name="Munir S."/>
            <person name="Li L."/>
            <person name="Kinsley K."/>
            <person name="Herron L."/>
            <person name="Peterson A."/>
            <person name="May B."/>
            <person name="Singh S."/>
            <person name="Gebhart C."/>
            <person name="Kapur V."/>
        </authorList>
    </citation>
    <scope>NUCLEOTIDE SEQUENCE [LARGE SCALE GENOMIC DNA]</scope>
    <source>
        <strain>PHE/MN1-00</strain>
    </source>
</reference>
<accession>Q1MRC0</accession>
<sequence length="188" mass="21371">MIGDIIAQRYAQALFDLGKEQSLHEVELYDTALSQIEELLMTSNELTYFLHAPIFTIYEKQGVLLKLLELIDAAQPIKNFCLLLAEKERLPLLTQIINSFKVLLDNAKNIVHGQLITAITLDEKKQSELLISLEKQTNRKLELLFQVNPDILGGIVLHIGDKVFDASLRTQLECIRNTIKKGETNHAY</sequence>
<name>ATPD_LAWIP</name>
<comment type="function">
    <text evidence="1">F(1)F(0) ATP synthase produces ATP from ADP in the presence of a proton or sodium gradient. F-type ATPases consist of two structural domains, F(1) containing the extramembraneous catalytic core and F(0) containing the membrane proton channel, linked together by a central stalk and a peripheral stalk. During catalysis, ATP synthesis in the catalytic domain of F(1) is coupled via a rotary mechanism of the central stalk subunits to proton translocation.</text>
</comment>
<comment type="function">
    <text evidence="1">This protein is part of the stalk that links CF(0) to CF(1). It either transmits conformational changes from CF(0) to CF(1) or is implicated in proton conduction.</text>
</comment>
<comment type="subunit">
    <text evidence="1">F-type ATPases have 2 components, F(1) - the catalytic core - and F(0) - the membrane proton channel. F(1) has five subunits: alpha(3), beta(3), gamma(1), delta(1), epsilon(1). F(0) has three main subunits: a(1), b(2) and c(10-14). The alpha and beta chains form an alternating ring which encloses part of the gamma chain. F(1) is attached to F(0) by a central stalk formed by the gamma and epsilon chains, while a peripheral stalk is formed by the delta and b chains.</text>
</comment>
<comment type="subcellular location">
    <subcellularLocation>
        <location evidence="1">Cell membrane</location>
        <topology evidence="1">Peripheral membrane protein</topology>
    </subcellularLocation>
</comment>
<comment type="similarity">
    <text evidence="1">Belongs to the ATPase delta chain family.</text>
</comment>
<protein>
    <recommendedName>
        <fullName evidence="1">ATP synthase subunit delta</fullName>
    </recommendedName>
    <alternativeName>
        <fullName evidence="1">ATP synthase F(1) sector subunit delta</fullName>
    </alternativeName>
    <alternativeName>
        <fullName evidence="1">F-type ATPase subunit delta</fullName>
        <shortName evidence="1">F-ATPase subunit delta</shortName>
    </alternativeName>
</protein>
<evidence type="ECO:0000255" key="1">
    <source>
        <dbReference type="HAMAP-Rule" id="MF_01416"/>
    </source>
</evidence>